<organism>
    <name type="scientific">Ictalurid herpesvirus 1 (strain Auburn)</name>
    <name type="common">IcHV-1</name>
    <name type="synonym">Channel catfish herpesvirus</name>
    <dbReference type="NCBI Taxonomy" id="766178"/>
    <lineage>
        <taxon>Viruses</taxon>
        <taxon>Duplodnaviria</taxon>
        <taxon>Heunggongvirae</taxon>
        <taxon>Peploviricota</taxon>
        <taxon>Herviviricetes</taxon>
        <taxon>Herpesvirales</taxon>
        <taxon>Alloherpesviridae</taxon>
        <taxon>Ictavirus</taxon>
        <taxon>Ictavirus ictaluridallo1</taxon>
        <taxon>Ictalurid herpesvirus 1</taxon>
    </lineage>
</organism>
<gene>
    <name type="primary">ORF77</name>
</gene>
<reference key="1">
    <citation type="journal article" date="1992" name="Virology">
        <title>Channel catfish virus: a new type of herpesvirus.</title>
        <authorList>
            <person name="Davison A.J."/>
        </authorList>
    </citation>
    <scope>NUCLEOTIDE SEQUENCE [LARGE SCALE GENOMIC DNA]</scope>
</reference>
<accession>Q00149</accession>
<protein>
    <recommendedName>
        <fullName>Uncharacterized protein ORF77</fullName>
    </recommendedName>
</protein>
<organismHost>
    <name type="scientific">Ictaluridae</name>
    <name type="common">bullhead catfishes</name>
    <dbReference type="NCBI Taxonomy" id="7996"/>
</organismHost>
<name>VG77_ICHVA</name>
<keyword id="KW-1185">Reference proteome</keyword>
<feature type="chain" id="PRO_0000222151" description="Uncharacterized protein ORF77">
    <location>
        <begin position="1"/>
        <end position="228"/>
    </location>
</feature>
<proteinExistence type="predicted"/>
<sequence length="228" mass="25604">MARKGEPPSYIKALTPEIVSAVIPEAYPLFVYESKHWSSGFPIPENSNRSTGRYDDWVYDLARTKKGTTLAFAGRMGSGKDHACDYCISKIGGEKVHVFDAGLMRATKFLGRPIEKPRDRPFLQAIGDLGRRLDANFWVRDAIEKIVAPMWSRGVNVFITGVRFPTEIEALAGLGVRTVLIRRPRILTGSPMERHRSETALDEYRDCPEILNDSTIAAFEDRVSTFLP</sequence>
<dbReference type="EMBL" id="M75136">
    <property type="protein sequence ID" value="AAA88179.1"/>
    <property type="molecule type" value="Genomic_DNA"/>
</dbReference>
<dbReference type="PIR" id="C36794">
    <property type="entry name" value="C36794"/>
</dbReference>
<dbReference type="RefSeq" id="NP_041167.1">
    <property type="nucleotide sequence ID" value="NC_001493.2"/>
</dbReference>
<dbReference type="SMR" id="Q00149"/>
<dbReference type="GeneID" id="1488432"/>
<dbReference type="KEGG" id="vg:1488432"/>
<dbReference type="Proteomes" id="UP000007643">
    <property type="component" value="Segment"/>
</dbReference>
<dbReference type="Gene3D" id="3.40.50.300">
    <property type="entry name" value="P-loop containing nucleotide triphosphate hydrolases"/>
    <property type="match status" value="1"/>
</dbReference>
<dbReference type="InterPro" id="IPR027417">
    <property type="entry name" value="P-loop_NTPase"/>
</dbReference>